<name>WAAY_ECOLX</name>
<proteinExistence type="evidence at protein level"/>
<gene>
    <name evidence="2" type="primary">waaY</name>
    <name type="synonym">rfaY</name>
</gene>
<organism>
    <name type="scientific">Escherichia coli</name>
    <dbReference type="NCBI Taxonomy" id="562"/>
    <lineage>
        <taxon>Bacteria</taxon>
        <taxon>Pseudomonadati</taxon>
        <taxon>Pseudomonadota</taxon>
        <taxon>Gammaproteobacteria</taxon>
        <taxon>Enterobacterales</taxon>
        <taxon>Enterobacteriaceae</taxon>
        <taxon>Escherichia</taxon>
    </lineage>
</organism>
<comment type="function">
    <text evidence="1">Kinase involved in the biosynthesis of the core oligosaccharide region of lipopolysaccharide (LPS) (PubMed:9756860). Catalyzes the phosphorylation of the second heptose unit (HepII) of the inner core (PubMed:9756860).</text>
</comment>
<comment type="catalytic activity">
    <reaction evidence="1">
        <text>alpha-D-Glc-(1-&gt;3)-[L-alpha-D-Hep-(1-&gt;7)]-L-alpha-D-Hep-(1-&gt;3)-4-O-PO3(2-)-L-alpha-D-Hep-(1-&gt;5)-[alpha-Kdo-(2-&gt;4)]-alpha-Kdo-(2-&gt;6)-lipid A + ATP = alpha-D-Glc-(1-&gt;3)-[L-alpha-D-Hep-(1-&gt;7)]-4-O-PO3(2-)-L-alpha-D-Hep-(1-&gt;3)-4-O-PO3(2-)-L-alpha-D-Hep-(1-&gt;5)-[alpha-Kdo-(2-&gt;4)]-alpha-Kdo-(2-&gt;6)-lipid A + ADP + H(+)</text>
        <dbReference type="Rhea" id="RHEA:29931"/>
        <dbReference type="ChEBI" id="CHEBI:15378"/>
        <dbReference type="ChEBI" id="CHEBI:30616"/>
        <dbReference type="ChEBI" id="CHEBI:61999"/>
        <dbReference type="ChEBI" id="CHEBI:62000"/>
        <dbReference type="ChEBI" id="CHEBI:456216"/>
    </reaction>
</comment>
<comment type="pathway">
    <text evidence="1">Bacterial outer membrane biogenesis; LPS core biosynthesis.</text>
</comment>
<comment type="disruption phenotype">
    <text evidence="1">Mutation of the gene results in a core oligosaccharide devoid of phosphate on HepII.</text>
</comment>
<comment type="similarity">
    <text evidence="3">Belongs to the protein kinase superfamily. RfaY/WaaY family.</text>
</comment>
<keyword id="KW-0067">ATP-binding</keyword>
<keyword id="KW-0418">Kinase</keyword>
<keyword id="KW-0448">Lipopolysaccharide biosynthesis</keyword>
<keyword id="KW-0547">Nucleotide-binding</keyword>
<keyword id="KW-0808">Transferase</keyword>
<reference key="1">
    <citation type="journal article" date="1998" name="J. Biol. Chem.">
        <title>The assembly system for the outer core portion of R1- and R4-type lipopolysaccharides of Escherichia coli. The R1 core-specific beta-glucosyltransferase provides a novel attachment site for O-polysaccharides.</title>
        <authorList>
            <person name="Heinrichs D.E."/>
            <person name="Yethon J.A."/>
            <person name="Amor P.A."/>
            <person name="Whitfield C."/>
        </authorList>
    </citation>
    <scope>NUCLEOTIDE SEQUENCE [GENOMIC DNA]</scope>
    <source>
        <strain>F470</strain>
    </source>
</reference>
<reference key="2">
    <citation type="journal article" date="1998" name="J. Biol. Chem.">
        <title>Involvement of waaY, waaQ, and waaP in the modification of Escherichia coli lipopolysaccharide and their role in the formation of a stable outer membrane.</title>
        <authorList>
            <person name="Yethon J.A."/>
            <person name="Heinrichs D.E."/>
            <person name="Monteiro M.A."/>
            <person name="Perry M.B."/>
            <person name="Whitfield C."/>
        </authorList>
    </citation>
    <scope>FUNCTION AS A KINASE</scope>
    <scope>CATALYTIC ACTIVITY</scope>
    <scope>PATHWAY</scope>
    <scope>DISRUPTION PHENOTYPE</scope>
    <source>
        <strain>F470</strain>
    </source>
</reference>
<dbReference type="EC" id="2.7.1.-" evidence="1"/>
<dbReference type="EMBL" id="AF019746">
    <property type="protein sequence ID" value="AAC69674.1"/>
    <property type="molecule type" value="Genomic_DNA"/>
</dbReference>
<dbReference type="RefSeq" id="WP_000633087.1">
    <property type="nucleotide sequence ID" value="NZ_WVVT01000019.1"/>
</dbReference>
<dbReference type="STRING" id="585034.ECIAI1_3797"/>
<dbReference type="GeneID" id="75173821"/>
<dbReference type="eggNOG" id="COG0661">
    <property type="taxonomic scope" value="Bacteria"/>
</dbReference>
<dbReference type="OMA" id="TWIIAEY"/>
<dbReference type="UniPathway" id="UPA00958"/>
<dbReference type="GO" id="GO:0005524">
    <property type="term" value="F:ATP binding"/>
    <property type="evidence" value="ECO:0007669"/>
    <property type="project" value="UniProtKB-KW"/>
</dbReference>
<dbReference type="GO" id="GO:0016301">
    <property type="term" value="F:kinase activity"/>
    <property type="evidence" value="ECO:0007669"/>
    <property type="project" value="UniProtKB-KW"/>
</dbReference>
<dbReference type="GO" id="GO:0009244">
    <property type="term" value="P:lipopolysaccharide core region biosynthetic process"/>
    <property type="evidence" value="ECO:0007669"/>
    <property type="project" value="UniProtKB-UniPathway"/>
</dbReference>
<dbReference type="InterPro" id="IPR011009">
    <property type="entry name" value="Kinase-like_dom_sf"/>
</dbReference>
<dbReference type="InterPro" id="IPR009330">
    <property type="entry name" value="LipoPS_heptP_kinase"/>
</dbReference>
<dbReference type="NCBIfam" id="NF007684">
    <property type="entry name" value="PRK10359.1"/>
    <property type="match status" value="1"/>
</dbReference>
<dbReference type="Pfam" id="PF06176">
    <property type="entry name" value="WaaY"/>
    <property type="match status" value="1"/>
</dbReference>
<dbReference type="SUPFAM" id="SSF56112">
    <property type="entry name" value="Protein kinase-like (PK-like)"/>
    <property type="match status" value="1"/>
</dbReference>
<sequence>MITSIRYRGFSFYYKDNDNKYKEIFDEILAYNFKTVKVLRNIDDTKVSLIDTKYGRYVFKVFAPKTKRNERFLKSFVKGDYYQNLIVETDRVRSAGLTFPNDFYFLAERKIFNYASVFIMLIEYVEGVELNDMPIIPENVKAEIKASMEKLHALNMLSGDPHRGNFIVSKDGVRIIDLSGKSCTAERKARDRLAMERHLGIANEIKDYGYYSVIYRTKLRKFIKKLKGKA</sequence>
<evidence type="ECO:0000269" key="1">
    <source>
    </source>
</evidence>
<evidence type="ECO:0000303" key="2">
    <source>
    </source>
</evidence>
<evidence type="ECO:0000305" key="3"/>
<accession>Q9ZIS7</accession>
<protein>
    <recommendedName>
        <fullName evidence="3">Lipopolysaccharide core heptose(II) kinase WaaY</fullName>
        <ecNumber evidence="1">2.7.1.-</ecNumber>
    </recommendedName>
</protein>
<feature type="chain" id="PRO_0000383674" description="Lipopolysaccharide core heptose(II) kinase WaaY">
    <location>
        <begin position="1"/>
        <end position="230"/>
    </location>
</feature>